<reference key="1">
    <citation type="journal article" date="2001" name="Nature">
        <title>Genome sequence of Yersinia pestis, the causative agent of plague.</title>
        <authorList>
            <person name="Parkhill J."/>
            <person name="Wren B.W."/>
            <person name="Thomson N.R."/>
            <person name="Titball R.W."/>
            <person name="Holden M.T.G."/>
            <person name="Prentice M.B."/>
            <person name="Sebaihia M."/>
            <person name="James K.D."/>
            <person name="Churcher C.M."/>
            <person name="Mungall K.L."/>
            <person name="Baker S."/>
            <person name="Basham D."/>
            <person name="Bentley S.D."/>
            <person name="Brooks K."/>
            <person name="Cerdeno-Tarraga A.-M."/>
            <person name="Chillingworth T."/>
            <person name="Cronin A."/>
            <person name="Davies R.M."/>
            <person name="Davis P."/>
            <person name="Dougan G."/>
            <person name="Feltwell T."/>
            <person name="Hamlin N."/>
            <person name="Holroyd S."/>
            <person name="Jagels K."/>
            <person name="Karlyshev A.V."/>
            <person name="Leather S."/>
            <person name="Moule S."/>
            <person name="Oyston P.C.F."/>
            <person name="Quail M.A."/>
            <person name="Rutherford K.M."/>
            <person name="Simmonds M."/>
            <person name="Skelton J."/>
            <person name="Stevens K."/>
            <person name="Whitehead S."/>
            <person name="Barrell B.G."/>
        </authorList>
    </citation>
    <scope>NUCLEOTIDE SEQUENCE [LARGE SCALE GENOMIC DNA]</scope>
    <source>
        <strain>CO-92 / Biovar Orientalis</strain>
    </source>
</reference>
<reference key="2">
    <citation type="journal article" date="2002" name="J. Bacteriol.">
        <title>Genome sequence of Yersinia pestis KIM.</title>
        <authorList>
            <person name="Deng W."/>
            <person name="Burland V."/>
            <person name="Plunkett G. III"/>
            <person name="Boutin A."/>
            <person name="Mayhew G.F."/>
            <person name="Liss P."/>
            <person name="Perna N.T."/>
            <person name="Rose D.J."/>
            <person name="Mau B."/>
            <person name="Zhou S."/>
            <person name="Schwartz D.C."/>
            <person name="Fetherston J.D."/>
            <person name="Lindler L.E."/>
            <person name="Brubaker R.R."/>
            <person name="Plano G.V."/>
            <person name="Straley S.C."/>
            <person name="McDonough K.A."/>
            <person name="Nilles M.L."/>
            <person name="Matson J.S."/>
            <person name="Blattner F.R."/>
            <person name="Perry R.D."/>
        </authorList>
    </citation>
    <scope>NUCLEOTIDE SEQUENCE [LARGE SCALE GENOMIC DNA]</scope>
    <source>
        <strain>KIM10+ / Biovar Mediaevalis</strain>
    </source>
</reference>
<reference key="3">
    <citation type="journal article" date="2004" name="DNA Res.">
        <title>Complete genome sequence of Yersinia pestis strain 91001, an isolate avirulent to humans.</title>
        <authorList>
            <person name="Song Y."/>
            <person name="Tong Z."/>
            <person name="Wang J."/>
            <person name="Wang L."/>
            <person name="Guo Z."/>
            <person name="Han Y."/>
            <person name="Zhang J."/>
            <person name="Pei D."/>
            <person name="Zhou D."/>
            <person name="Qin H."/>
            <person name="Pang X."/>
            <person name="Han Y."/>
            <person name="Zhai J."/>
            <person name="Li M."/>
            <person name="Cui B."/>
            <person name="Qi Z."/>
            <person name="Jin L."/>
            <person name="Dai R."/>
            <person name="Chen F."/>
            <person name="Li S."/>
            <person name="Ye C."/>
            <person name="Du Z."/>
            <person name="Lin W."/>
            <person name="Wang J."/>
            <person name="Yu J."/>
            <person name="Yang H."/>
            <person name="Wang J."/>
            <person name="Huang P."/>
            <person name="Yang R."/>
        </authorList>
    </citation>
    <scope>NUCLEOTIDE SEQUENCE [LARGE SCALE GENOMIC DNA]</scope>
    <source>
        <strain>91001 / Biovar Mediaevalis</strain>
    </source>
</reference>
<protein>
    <recommendedName>
        <fullName evidence="1">UPF0761 membrane protein YPO0028/y3801/YP_0029</fullName>
    </recommendedName>
</protein>
<comment type="subcellular location">
    <subcellularLocation>
        <location evidence="1">Cell inner membrane</location>
        <topology evidence="1">Multi-pass membrane protein</topology>
    </subcellularLocation>
</comment>
<comment type="similarity">
    <text evidence="1">Belongs to the UPF0761 family.</text>
</comment>
<comment type="sequence caution" evidence="2">
    <conflict type="erroneous initiation">
        <sequence resource="EMBL-CDS" id="AAM87346"/>
    </conflict>
</comment>
<comment type="sequence caution" evidence="2">
    <conflict type="erroneous initiation">
        <sequence resource="EMBL-CDS" id="AAS60310"/>
    </conflict>
</comment>
<accession>Q8ZJR1</accession>
<accession>Q0WKR4</accession>
<accession>Q8CWG6</accession>
<dbReference type="EMBL" id="AL590842">
    <property type="protein sequence ID" value="CAL18718.1"/>
    <property type="molecule type" value="Genomic_DNA"/>
</dbReference>
<dbReference type="EMBL" id="AE009952">
    <property type="protein sequence ID" value="AAM87346.1"/>
    <property type="status" value="ALT_INIT"/>
    <property type="molecule type" value="Genomic_DNA"/>
</dbReference>
<dbReference type="EMBL" id="AE017042">
    <property type="protein sequence ID" value="AAS60310.1"/>
    <property type="status" value="ALT_INIT"/>
    <property type="molecule type" value="Genomic_DNA"/>
</dbReference>
<dbReference type="PIR" id="AE0004">
    <property type="entry name" value="AE0004"/>
</dbReference>
<dbReference type="RefSeq" id="WP_002209010.1">
    <property type="nucleotide sequence ID" value="NZ_WUCM01000104.1"/>
</dbReference>
<dbReference type="RefSeq" id="YP_002345124.1">
    <property type="nucleotide sequence ID" value="NC_003143.1"/>
</dbReference>
<dbReference type="STRING" id="214092.YPO0028"/>
<dbReference type="PaxDb" id="214092-YPO0028"/>
<dbReference type="DNASU" id="1148748"/>
<dbReference type="EnsemblBacteria" id="AAS60310">
    <property type="protein sequence ID" value="AAS60310"/>
    <property type="gene ID" value="YP_0029"/>
</dbReference>
<dbReference type="KEGG" id="ype:YPO0028"/>
<dbReference type="KEGG" id="ypk:y3801"/>
<dbReference type="KEGG" id="ypm:YP_0029"/>
<dbReference type="PATRIC" id="fig|214092.21.peg.249"/>
<dbReference type="eggNOG" id="COG1295">
    <property type="taxonomic scope" value="Bacteria"/>
</dbReference>
<dbReference type="HOGENOM" id="CLU_032288_0_0_6"/>
<dbReference type="OrthoDB" id="9808671at2"/>
<dbReference type="Proteomes" id="UP000000815">
    <property type="component" value="Chromosome"/>
</dbReference>
<dbReference type="Proteomes" id="UP000001019">
    <property type="component" value="Chromosome"/>
</dbReference>
<dbReference type="Proteomes" id="UP000002490">
    <property type="component" value="Chromosome"/>
</dbReference>
<dbReference type="GO" id="GO:0005886">
    <property type="term" value="C:plasma membrane"/>
    <property type="evidence" value="ECO:0000318"/>
    <property type="project" value="GO_Central"/>
</dbReference>
<dbReference type="HAMAP" id="MF_00672">
    <property type="entry name" value="UPF0761"/>
    <property type="match status" value="1"/>
</dbReference>
<dbReference type="InterPro" id="IPR023679">
    <property type="entry name" value="UPF0761_bac"/>
</dbReference>
<dbReference type="InterPro" id="IPR017039">
    <property type="entry name" value="Virul_fac_BrkB"/>
</dbReference>
<dbReference type="NCBIfam" id="NF002457">
    <property type="entry name" value="PRK01637.1"/>
    <property type="match status" value="1"/>
</dbReference>
<dbReference type="NCBIfam" id="TIGR00765">
    <property type="entry name" value="yihY_not_rbn"/>
    <property type="match status" value="1"/>
</dbReference>
<dbReference type="PANTHER" id="PTHR30213">
    <property type="entry name" value="INNER MEMBRANE PROTEIN YHJD"/>
    <property type="match status" value="1"/>
</dbReference>
<dbReference type="PANTHER" id="PTHR30213:SF0">
    <property type="entry name" value="UPF0761 MEMBRANE PROTEIN YIHY"/>
    <property type="match status" value="1"/>
</dbReference>
<dbReference type="Pfam" id="PF03631">
    <property type="entry name" value="Virul_fac_BrkB"/>
    <property type="match status" value="1"/>
</dbReference>
<dbReference type="PIRSF" id="PIRSF035875">
    <property type="entry name" value="RNase_BN"/>
    <property type="match status" value="1"/>
</dbReference>
<proteinExistence type="inferred from homology"/>
<sequence>MASFRRFRLLSPLKPCVTFGRMLYTRIDKDGLTMLAGHLAYVSLLSLVPLITVIFALFAAFPMFAEISIKLKAFIFANFMPATGDIIQNYLEQFVANSNRMTVVGTCGLIVTALLLIYSVDSVLNIIWRSKIQRSLVFSFAVYWMVLTLGPILVGASMVISSYLLSLHWLAHARVDSMIDEILRVFPLLISWVSFWLLYSVVPTVRVPARDALIGALVAALLFELGKKGFAMYITLFPSYQLIYGVLAVIPILFLWVYWSWCIVLLGAEITVTLGEYRAERHHAKSVTTQSPEM</sequence>
<name>Y028_YERPE</name>
<feature type="chain" id="PRO_0000201007" description="UPF0761 membrane protein YPO0028/y3801/YP_0029">
    <location>
        <begin position="1"/>
        <end position="294"/>
    </location>
</feature>
<feature type="transmembrane region" description="Helical" evidence="1">
    <location>
        <begin position="44"/>
        <end position="64"/>
    </location>
</feature>
<feature type="transmembrane region" description="Helical" evidence="1">
    <location>
        <begin position="67"/>
        <end position="87"/>
    </location>
</feature>
<feature type="transmembrane region" description="Helical" evidence="1">
    <location>
        <begin position="108"/>
        <end position="128"/>
    </location>
</feature>
<feature type="transmembrane region" description="Helical" evidence="1">
    <location>
        <begin position="136"/>
        <end position="156"/>
    </location>
</feature>
<feature type="transmembrane region" description="Helical" evidence="1">
    <location>
        <begin position="185"/>
        <end position="205"/>
    </location>
</feature>
<feature type="transmembrane region" description="Helical" evidence="1">
    <location>
        <begin position="212"/>
        <end position="232"/>
    </location>
</feature>
<feature type="transmembrane region" description="Helical" evidence="1">
    <location>
        <begin position="246"/>
        <end position="266"/>
    </location>
</feature>
<organism>
    <name type="scientific">Yersinia pestis</name>
    <dbReference type="NCBI Taxonomy" id="632"/>
    <lineage>
        <taxon>Bacteria</taxon>
        <taxon>Pseudomonadati</taxon>
        <taxon>Pseudomonadota</taxon>
        <taxon>Gammaproteobacteria</taxon>
        <taxon>Enterobacterales</taxon>
        <taxon>Yersiniaceae</taxon>
        <taxon>Yersinia</taxon>
    </lineage>
</organism>
<evidence type="ECO:0000255" key="1">
    <source>
        <dbReference type="HAMAP-Rule" id="MF_00672"/>
    </source>
</evidence>
<evidence type="ECO:0000305" key="2"/>
<gene>
    <name type="ordered locus">YPO0028</name>
    <name type="ordered locus">y3801</name>
    <name type="ordered locus">YP_0029</name>
</gene>
<keyword id="KW-0997">Cell inner membrane</keyword>
<keyword id="KW-1003">Cell membrane</keyword>
<keyword id="KW-0472">Membrane</keyword>
<keyword id="KW-1185">Reference proteome</keyword>
<keyword id="KW-0812">Transmembrane</keyword>
<keyword id="KW-1133">Transmembrane helix</keyword>